<protein>
    <recommendedName>
        <fullName evidence="2">Large ribosomal subunit protein uL2c</fullName>
    </recommendedName>
    <alternativeName>
        <fullName evidence="4">50S ribosomal protein L2, chloroplastic</fullName>
    </alternativeName>
</protein>
<dbReference type="EMBL" id="EU118126">
    <property type="protein sequence ID" value="ABV02389.1"/>
    <property type="molecule type" value="Genomic_DNA"/>
</dbReference>
<dbReference type="RefSeq" id="YP_001468349.1">
    <property type="nucleotide sequence ID" value="NC_009808.1"/>
</dbReference>
<dbReference type="SMR" id="A7Y3J3"/>
<dbReference type="GeneID" id="5601268"/>
<dbReference type="GO" id="GO:0009507">
    <property type="term" value="C:chloroplast"/>
    <property type="evidence" value="ECO:0007669"/>
    <property type="project" value="UniProtKB-SubCell"/>
</dbReference>
<dbReference type="GO" id="GO:0005762">
    <property type="term" value="C:mitochondrial large ribosomal subunit"/>
    <property type="evidence" value="ECO:0007669"/>
    <property type="project" value="TreeGrafter"/>
</dbReference>
<dbReference type="GO" id="GO:0019843">
    <property type="term" value="F:rRNA binding"/>
    <property type="evidence" value="ECO:0007669"/>
    <property type="project" value="UniProtKB-UniRule"/>
</dbReference>
<dbReference type="GO" id="GO:0003735">
    <property type="term" value="F:structural constituent of ribosome"/>
    <property type="evidence" value="ECO:0007669"/>
    <property type="project" value="InterPro"/>
</dbReference>
<dbReference type="GO" id="GO:0016740">
    <property type="term" value="F:transferase activity"/>
    <property type="evidence" value="ECO:0007669"/>
    <property type="project" value="InterPro"/>
</dbReference>
<dbReference type="GO" id="GO:0032543">
    <property type="term" value="P:mitochondrial translation"/>
    <property type="evidence" value="ECO:0007669"/>
    <property type="project" value="TreeGrafter"/>
</dbReference>
<dbReference type="FunFam" id="4.10.950.10:FF:000001">
    <property type="entry name" value="50S ribosomal protein L2"/>
    <property type="match status" value="1"/>
</dbReference>
<dbReference type="FunFam" id="2.30.30.30:FF:000008">
    <property type="entry name" value="50S ribosomal protein L2, chloroplastic"/>
    <property type="match status" value="1"/>
</dbReference>
<dbReference type="FunFam" id="2.40.50.140:FF:000029">
    <property type="entry name" value="50S ribosomal protein L2, chloroplastic"/>
    <property type="match status" value="1"/>
</dbReference>
<dbReference type="Gene3D" id="2.30.30.30">
    <property type="match status" value="1"/>
</dbReference>
<dbReference type="Gene3D" id="2.40.50.140">
    <property type="entry name" value="Nucleic acid-binding proteins"/>
    <property type="match status" value="1"/>
</dbReference>
<dbReference type="Gene3D" id="4.10.950.10">
    <property type="entry name" value="Ribosomal protein L2, domain 3"/>
    <property type="match status" value="1"/>
</dbReference>
<dbReference type="HAMAP" id="MF_01320_B">
    <property type="entry name" value="Ribosomal_uL2_B"/>
    <property type="match status" value="1"/>
</dbReference>
<dbReference type="InterPro" id="IPR012340">
    <property type="entry name" value="NA-bd_OB-fold"/>
</dbReference>
<dbReference type="InterPro" id="IPR014722">
    <property type="entry name" value="Rib_uL2_dom2"/>
</dbReference>
<dbReference type="InterPro" id="IPR002171">
    <property type="entry name" value="Ribosomal_uL2"/>
</dbReference>
<dbReference type="InterPro" id="IPR005880">
    <property type="entry name" value="Ribosomal_uL2_bac/org-type"/>
</dbReference>
<dbReference type="InterPro" id="IPR022669">
    <property type="entry name" value="Ribosomal_uL2_C"/>
</dbReference>
<dbReference type="InterPro" id="IPR022671">
    <property type="entry name" value="Ribosomal_uL2_CS"/>
</dbReference>
<dbReference type="InterPro" id="IPR014726">
    <property type="entry name" value="Ribosomal_uL2_dom3"/>
</dbReference>
<dbReference type="InterPro" id="IPR022666">
    <property type="entry name" value="Ribosomal_uL2_RNA-bd_dom"/>
</dbReference>
<dbReference type="InterPro" id="IPR008991">
    <property type="entry name" value="Translation_prot_SH3-like_sf"/>
</dbReference>
<dbReference type="NCBIfam" id="TIGR01171">
    <property type="entry name" value="rplB_bact"/>
    <property type="match status" value="1"/>
</dbReference>
<dbReference type="PANTHER" id="PTHR13691:SF5">
    <property type="entry name" value="LARGE RIBOSOMAL SUBUNIT PROTEIN UL2M"/>
    <property type="match status" value="1"/>
</dbReference>
<dbReference type="PANTHER" id="PTHR13691">
    <property type="entry name" value="RIBOSOMAL PROTEIN L2"/>
    <property type="match status" value="1"/>
</dbReference>
<dbReference type="Pfam" id="PF00181">
    <property type="entry name" value="Ribosomal_L2"/>
    <property type="match status" value="1"/>
</dbReference>
<dbReference type="Pfam" id="PF03947">
    <property type="entry name" value="Ribosomal_L2_C"/>
    <property type="match status" value="1"/>
</dbReference>
<dbReference type="PIRSF" id="PIRSF002158">
    <property type="entry name" value="Ribosomal_L2"/>
    <property type="match status" value="1"/>
</dbReference>
<dbReference type="SMART" id="SM01383">
    <property type="entry name" value="Ribosomal_L2"/>
    <property type="match status" value="1"/>
</dbReference>
<dbReference type="SMART" id="SM01382">
    <property type="entry name" value="Ribosomal_L2_C"/>
    <property type="match status" value="1"/>
</dbReference>
<dbReference type="SUPFAM" id="SSF50249">
    <property type="entry name" value="Nucleic acid-binding proteins"/>
    <property type="match status" value="1"/>
</dbReference>
<dbReference type="SUPFAM" id="SSF50104">
    <property type="entry name" value="Translation proteins SH3-like domain"/>
    <property type="match status" value="1"/>
</dbReference>
<dbReference type="PROSITE" id="PS00467">
    <property type="entry name" value="RIBOSOMAL_L2"/>
    <property type="match status" value="1"/>
</dbReference>
<geneLocation type="chloroplast"/>
<comment type="subunit">
    <text evidence="1">Part of the 50S ribosomal subunit.</text>
</comment>
<comment type="subcellular location">
    <subcellularLocation>
        <location>Plastid</location>
        <location>Chloroplast</location>
    </subcellularLocation>
</comment>
<comment type="similarity">
    <text evidence="4">Belongs to the universal ribosomal protein uL2 family.</text>
</comment>
<name>RK2_IPOPU</name>
<evidence type="ECO:0000250" key="1"/>
<evidence type="ECO:0000255" key="2">
    <source>
        <dbReference type="HAMAP-Rule" id="MF_01320"/>
    </source>
</evidence>
<evidence type="ECO:0000256" key="3">
    <source>
        <dbReference type="SAM" id="MobiDB-lite"/>
    </source>
</evidence>
<evidence type="ECO:0000305" key="4"/>
<organism>
    <name type="scientific">Ipomoea purpurea</name>
    <name type="common">Common morning glory</name>
    <name type="synonym">Pharbitis purpurea</name>
    <dbReference type="NCBI Taxonomy" id="4121"/>
    <lineage>
        <taxon>Eukaryota</taxon>
        <taxon>Viridiplantae</taxon>
        <taxon>Streptophyta</taxon>
        <taxon>Embryophyta</taxon>
        <taxon>Tracheophyta</taxon>
        <taxon>Spermatophyta</taxon>
        <taxon>Magnoliopsida</taxon>
        <taxon>eudicotyledons</taxon>
        <taxon>Gunneridae</taxon>
        <taxon>Pentapetalae</taxon>
        <taxon>asterids</taxon>
        <taxon>lamiids</taxon>
        <taxon>Solanales</taxon>
        <taxon>Convolvulaceae</taxon>
        <taxon>Ipomoeeae</taxon>
        <taxon>Ipomoea</taxon>
    </lineage>
</organism>
<proteinExistence type="inferred from homology"/>
<feature type="chain" id="PRO_0000342540" description="Large ribosomal subunit protein uL2c">
    <location>
        <begin position="1"/>
        <end position="274"/>
    </location>
</feature>
<feature type="region of interest" description="Disordered" evidence="3">
    <location>
        <begin position="224"/>
        <end position="274"/>
    </location>
</feature>
<reference key="1">
    <citation type="journal article" date="2007" name="BMC Plant Biol.">
        <title>Complete plastid genome sequences suggest strong selection for retention of photosynthetic genes in the parasitic plant genus Cuscuta.</title>
        <authorList>
            <person name="McNeal J.R."/>
            <person name="Kuehl J.V."/>
            <person name="Boore J.L."/>
            <person name="dePamphilis C.W."/>
        </authorList>
    </citation>
    <scope>NUCLEOTIDE SEQUENCE [LARGE SCALE GENOMIC DNA]</scope>
</reference>
<gene>
    <name type="primary">rpl2</name>
</gene>
<accession>A7Y3J3</accession>
<sequence>MVIQLYKTYTPSTRNGTVNGQVKSTRGKNLIYGQHRCGKGRNARGIITARHRGGGHKRLYRKIDFRRNEKDIYGRIVTIEYDPNRNAYICLIHYGNGEKRYILHPRGAIIGDSIVSGTEVSIKIGNALPLTEMPLGTAIHNIEITLGKGGQLARAAGAVAKLIAKEGKSATIKLPSGEVRLISKNCSATVGQVGNVGVNQKSLGRAGAKRWLGKRPVVRGVVMNPVDHPHGGGEGRAPIGRKKPTTPWGYPALGRKSRKRNKYSEKFILRHRSK</sequence>
<keyword id="KW-0150">Chloroplast</keyword>
<keyword id="KW-0934">Plastid</keyword>
<keyword id="KW-0687">Ribonucleoprotein</keyword>
<keyword id="KW-0689">Ribosomal protein</keyword>